<feature type="chain" id="PRO_0000387071" description="Ribosomal RNA small subunit methyltransferase H">
    <location>
        <begin position="1"/>
        <end position="341"/>
    </location>
</feature>
<feature type="binding site" evidence="1">
    <location>
        <begin position="47"/>
        <end position="49"/>
    </location>
    <ligand>
        <name>S-adenosyl-L-methionine</name>
        <dbReference type="ChEBI" id="CHEBI:59789"/>
    </ligand>
</feature>
<feature type="binding site" evidence="1">
    <location>
        <position position="64"/>
    </location>
    <ligand>
        <name>S-adenosyl-L-methionine</name>
        <dbReference type="ChEBI" id="CHEBI:59789"/>
    </ligand>
</feature>
<feature type="binding site" evidence="1">
    <location>
        <position position="91"/>
    </location>
    <ligand>
        <name>S-adenosyl-L-methionine</name>
        <dbReference type="ChEBI" id="CHEBI:59789"/>
    </ligand>
</feature>
<feature type="binding site" evidence="1">
    <location>
        <position position="109"/>
    </location>
    <ligand>
        <name>S-adenosyl-L-methionine</name>
        <dbReference type="ChEBI" id="CHEBI:59789"/>
    </ligand>
</feature>
<feature type="binding site" evidence="1">
    <location>
        <position position="116"/>
    </location>
    <ligand>
        <name>S-adenosyl-L-methionine</name>
        <dbReference type="ChEBI" id="CHEBI:59789"/>
    </ligand>
</feature>
<name>RSMH_RHIJ3</name>
<gene>
    <name evidence="1" type="primary">rsmH</name>
    <name type="synonym">mraW</name>
    <name type="ordered locus">RL3315</name>
</gene>
<organism>
    <name type="scientific">Rhizobium johnstonii (strain DSM 114642 / LMG 32736 / 3841)</name>
    <name type="common">Rhizobium leguminosarum bv. viciae</name>
    <dbReference type="NCBI Taxonomy" id="216596"/>
    <lineage>
        <taxon>Bacteria</taxon>
        <taxon>Pseudomonadati</taxon>
        <taxon>Pseudomonadota</taxon>
        <taxon>Alphaproteobacteria</taxon>
        <taxon>Hyphomicrobiales</taxon>
        <taxon>Rhizobiaceae</taxon>
        <taxon>Rhizobium/Agrobacterium group</taxon>
        <taxon>Rhizobium</taxon>
        <taxon>Rhizobium johnstonii</taxon>
    </lineage>
</organism>
<accession>Q1ME25</accession>
<reference key="1">
    <citation type="journal article" date="2006" name="Genome Biol.">
        <title>The genome of Rhizobium leguminosarum has recognizable core and accessory components.</title>
        <authorList>
            <person name="Young J.P.W."/>
            <person name="Crossman L.C."/>
            <person name="Johnston A.W.B."/>
            <person name="Thomson N.R."/>
            <person name="Ghazoui Z.F."/>
            <person name="Hull K.H."/>
            <person name="Wexler M."/>
            <person name="Curson A.R.J."/>
            <person name="Todd J.D."/>
            <person name="Poole P.S."/>
            <person name="Mauchline T.H."/>
            <person name="East A.K."/>
            <person name="Quail M.A."/>
            <person name="Churcher C."/>
            <person name="Arrowsmith C."/>
            <person name="Cherevach I."/>
            <person name="Chillingworth T."/>
            <person name="Clarke K."/>
            <person name="Cronin A."/>
            <person name="Davis P."/>
            <person name="Fraser A."/>
            <person name="Hance Z."/>
            <person name="Hauser H."/>
            <person name="Jagels K."/>
            <person name="Moule S."/>
            <person name="Mungall K."/>
            <person name="Norbertczak H."/>
            <person name="Rabbinowitsch E."/>
            <person name="Sanders M."/>
            <person name="Simmonds M."/>
            <person name="Whitehead S."/>
            <person name="Parkhill J."/>
        </authorList>
    </citation>
    <scope>NUCLEOTIDE SEQUENCE [LARGE SCALE GENOMIC DNA]</scope>
    <source>
        <strain>DSM 114642 / LMG 32736 / 3841</strain>
    </source>
</reference>
<evidence type="ECO:0000255" key="1">
    <source>
        <dbReference type="HAMAP-Rule" id="MF_01007"/>
    </source>
</evidence>
<comment type="function">
    <text evidence="1">Specifically methylates the N4 position of cytidine in position 1402 (C1402) of 16S rRNA.</text>
</comment>
<comment type="catalytic activity">
    <reaction evidence="1">
        <text>cytidine(1402) in 16S rRNA + S-adenosyl-L-methionine = N(4)-methylcytidine(1402) in 16S rRNA + S-adenosyl-L-homocysteine + H(+)</text>
        <dbReference type="Rhea" id="RHEA:42928"/>
        <dbReference type="Rhea" id="RHEA-COMP:10286"/>
        <dbReference type="Rhea" id="RHEA-COMP:10287"/>
        <dbReference type="ChEBI" id="CHEBI:15378"/>
        <dbReference type="ChEBI" id="CHEBI:57856"/>
        <dbReference type="ChEBI" id="CHEBI:59789"/>
        <dbReference type="ChEBI" id="CHEBI:74506"/>
        <dbReference type="ChEBI" id="CHEBI:82748"/>
        <dbReference type="EC" id="2.1.1.199"/>
    </reaction>
</comment>
<comment type="subcellular location">
    <subcellularLocation>
        <location evidence="1">Cytoplasm</location>
    </subcellularLocation>
</comment>
<comment type="similarity">
    <text evidence="1">Belongs to the methyltransferase superfamily. RsmH family.</text>
</comment>
<sequence>MVANPGGGSTDAGGGPVRHIPVLLDEVLAALAPAPGKFILDGTFGAGGYSSAILAAGAEVIALDRDPTAIAAGQAMVAAHGGRLRLVHSQFSHLADHAPQGGLDGVVLDIGVSSMQIDEAERGFSFQKNGPLDMRMSAEGVSAADVVNRAKVADLIRIFHFLGEESQAPRIAHAIEKRRAEKPFETTRDLAGLIELVTPRKMKDKIHPATRVFQALRIFVNDELGELAQALFAAETALKPGGRLVVVTFHSLEDRIVKKFFSDRAGKASGSRHLPVAHERAATFEAVGKPMVSASEAEAEINPRARSAKLRAGLRTYAAAEAADMSLFGFPNLASLGKLGG</sequence>
<proteinExistence type="inferred from homology"/>
<dbReference type="EC" id="2.1.1.199" evidence="1"/>
<dbReference type="EMBL" id="AM236080">
    <property type="protein sequence ID" value="CAK08802.1"/>
    <property type="molecule type" value="Genomic_DNA"/>
</dbReference>
<dbReference type="RefSeq" id="WP_011652804.1">
    <property type="nucleotide sequence ID" value="NC_008380.1"/>
</dbReference>
<dbReference type="SMR" id="Q1ME25"/>
<dbReference type="EnsemblBacteria" id="CAK08802">
    <property type="protein sequence ID" value="CAK08802"/>
    <property type="gene ID" value="RL3315"/>
</dbReference>
<dbReference type="KEGG" id="rle:RL3315"/>
<dbReference type="eggNOG" id="COG0275">
    <property type="taxonomic scope" value="Bacteria"/>
</dbReference>
<dbReference type="HOGENOM" id="CLU_038422_1_1_5"/>
<dbReference type="Proteomes" id="UP000006575">
    <property type="component" value="Chromosome"/>
</dbReference>
<dbReference type="GO" id="GO:0005737">
    <property type="term" value="C:cytoplasm"/>
    <property type="evidence" value="ECO:0007669"/>
    <property type="project" value="UniProtKB-SubCell"/>
</dbReference>
<dbReference type="GO" id="GO:0071424">
    <property type="term" value="F:rRNA (cytosine-N4-)-methyltransferase activity"/>
    <property type="evidence" value="ECO:0007669"/>
    <property type="project" value="UniProtKB-UniRule"/>
</dbReference>
<dbReference type="GO" id="GO:0070475">
    <property type="term" value="P:rRNA base methylation"/>
    <property type="evidence" value="ECO:0007669"/>
    <property type="project" value="UniProtKB-UniRule"/>
</dbReference>
<dbReference type="Gene3D" id="1.10.150.170">
    <property type="entry name" value="Putative methyltransferase TM0872, insert domain"/>
    <property type="match status" value="1"/>
</dbReference>
<dbReference type="Gene3D" id="3.40.50.150">
    <property type="entry name" value="Vaccinia Virus protein VP39"/>
    <property type="match status" value="1"/>
</dbReference>
<dbReference type="HAMAP" id="MF_01007">
    <property type="entry name" value="16SrRNA_methyltr_H"/>
    <property type="match status" value="1"/>
</dbReference>
<dbReference type="InterPro" id="IPR002903">
    <property type="entry name" value="RsmH"/>
</dbReference>
<dbReference type="InterPro" id="IPR023397">
    <property type="entry name" value="SAM-dep_MeTrfase_MraW_recog"/>
</dbReference>
<dbReference type="InterPro" id="IPR029063">
    <property type="entry name" value="SAM-dependent_MTases_sf"/>
</dbReference>
<dbReference type="NCBIfam" id="TIGR00006">
    <property type="entry name" value="16S rRNA (cytosine(1402)-N(4))-methyltransferase RsmH"/>
    <property type="match status" value="1"/>
</dbReference>
<dbReference type="PANTHER" id="PTHR11265:SF0">
    <property type="entry name" value="12S RRNA N4-METHYLCYTIDINE METHYLTRANSFERASE"/>
    <property type="match status" value="1"/>
</dbReference>
<dbReference type="PANTHER" id="PTHR11265">
    <property type="entry name" value="S-ADENOSYL-METHYLTRANSFERASE MRAW"/>
    <property type="match status" value="1"/>
</dbReference>
<dbReference type="Pfam" id="PF01795">
    <property type="entry name" value="Methyltransf_5"/>
    <property type="match status" value="1"/>
</dbReference>
<dbReference type="PIRSF" id="PIRSF004486">
    <property type="entry name" value="MraW"/>
    <property type="match status" value="1"/>
</dbReference>
<dbReference type="SUPFAM" id="SSF81799">
    <property type="entry name" value="Putative methyltransferase TM0872, insert domain"/>
    <property type="match status" value="1"/>
</dbReference>
<dbReference type="SUPFAM" id="SSF53335">
    <property type="entry name" value="S-adenosyl-L-methionine-dependent methyltransferases"/>
    <property type="match status" value="1"/>
</dbReference>
<protein>
    <recommendedName>
        <fullName evidence="1">Ribosomal RNA small subunit methyltransferase H</fullName>
        <ecNumber evidence="1">2.1.1.199</ecNumber>
    </recommendedName>
    <alternativeName>
        <fullName evidence="1">16S rRNA m(4)C1402 methyltransferase</fullName>
    </alternativeName>
    <alternativeName>
        <fullName evidence="1">rRNA (cytosine-N(4)-)-methyltransferase RsmH</fullName>
    </alternativeName>
</protein>
<keyword id="KW-0963">Cytoplasm</keyword>
<keyword id="KW-0489">Methyltransferase</keyword>
<keyword id="KW-0698">rRNA processing</keyword>
<keyword id="KW-0949">S-adenosyl-L-methionine</keyword>
<keyword id="KW-0808">Transferase</keyword>